<evidence type="ECO:0000255" key="1">
    <source>
        <dbReference type="HAMAP-Rule" id="MF_00233"/>
    </source>
</evidence>
<proteinExistence type="evidence at protein level"/>
<dbReference type="EMBL" id="AE016828">
    <property type="protein sequence ID" value="AAO91322.1"/>
    <property type="molecule type" value="Genomic_DNA"/>
</dbReference>
<dbReference type="RefSeq" id="NP_820808.1">
    <property type="nucleotide sequence ID" value="NC_002971.4"/>
</dbReference>
<dbReference type="RefSeq" id="WP_010958471.1">
    <property type="nucleotide sequence ID" value="NC_002971.4"/>
</dbReference>
<dbReference type="SMR" id="Q83AQ2"/>
<dbReference type="STRING" id="227377.CBU_1829"/>
<dbReference type="EnsemblBacteria" id="AAO91322">
    <property type="protein sequence ID" value="AAO91322"/>
    <property type="gene ID" value="CBU_1829"/>
</dbReference>
<dbReference type="GeneID" id="1209740"/>
<dbReference type="KEGG" id="cbu:CBU_1829"/>
<dbReference type="PATRIC" id="fig|227377.7.peg.1813"/>
<dbReference type="eggNOG" id="COG3017">
    <property type="taxonomic scope" value="Bacteria"/>
</dbReference>
<dbReference type="HOGENOM" id="CLU_092816_2_1_6"/>
<dbReference type="OrthoDB" id="9797618at2"/>
<dbReference type="Proteomes" id="UP000002671">
    <property type="component" value="Chromosome"/>
</dbReference>
<dbReference type="GO" id="GO:0009279">
    <property type="term" value="C:cell outer membrane"/>
    <property type="evidence" value="ECO:0007669"/>
    <property type="project" value="UniProtKB-SubCell"/>
</dbReference>
<dbReference type="GO" id="GO:0044874">
    <property type="term" value="P:lipoprotein localization to outer membrane"/>
    <property type="evidence" value="ECO:0007669"/>
    <property type="project" value="UniProtKB-UniRule"/>
</dbReference>
<dbReference type="GO" id="GO:0015031">
    <property type="term" value="P:protein transport"/>
    <property type="evidence" value="ECO:0007669"/>
    <property type="project" value="UniProtKB-KW"/>
</dbReference>
<dbReference type="CDD" id="cd16326">
    <property type="entry name" value="LolB"/>
    <property type="match status" value="1"/>
</dbReference>
<dbReference type="Gene3D" id="2.50.20.10">
    <property type="entry name" value="Lipoprotein localisation LolA/LolB/LppX"/>
    <property type="match status" value="1"/>
</dbReference>
<dbReference type="HAMAP" id="MF_00233">
    <property type="entry name" value="LolB"/>
    <property type="match status" value="1"/>
</dbReference>
<dbReference type="InterPro" id="IPR029046">
    <property type="entry name" value="LolA/LolB/LppX"/>
</dbReference>
<dbReference type="InterPro" id="IPR004565">
    <property type="entry name" value="OM_lipoprot_LolB"/>
</dbReference>
<dbReference type="NCBIfam" id="TIGR00548">
    <property type="entry name" value="lolB"/>
    <property type="match status" value="1"/>
</dbReference>
<dbReference type="Pfam" id="PF03550">
    <property type="entry name" value="LolB"/>
    <property type="match status" value="1"/>
</dbReference>
<dbReference type="SUPFAM" id="SSF89392">
    <property type="entry name" value="Prokaryotic lipoproteins and lipoprotein localization factors"/>
    <property type="match status" value="1"/>
</dbReference>
<gene>
    <name evidence="1" type="primary">lolB</name>
    <name type="ordered locus">CBU_1829</name>
</gene>
<feature type="signal peptide" evidence="1">
    <location>
        <begin position="1"/>
        <end position="29"/>
    </location>
</feature>
<feature type="chain" id="PRO_0000018295" description="Outer-membrane lipoprotein LolB">
    <location>
        <begin position="30"/>
        <end position="210"/>
    </location>
</feature>
<feature type="lipid moiety-binding region" description="N-palmitoyl cysteine" evidence="1">
    <location>
        <position position="30"/>
    </location>
</feature>
<feature type="lipid moiety-binding region" description="S-diacylglycerol cysteine" evidence="1">
    <location>
        <position position="30"/>
    </location>
</feature>
<name>LOLB_COXBU</name>
<reference key="1">
    <citation type="journal article" date="2003" name="Proc. Natl. Acad. Sci. U.S.A.">
        <title>Complete genome sequence of the Q-fever pathogen, Coxiella burnetii.</title>
        <authorList>
            <person name="Seshadri R."/>
            <person name="Paulsen I.T."/>
            <person name="Eisen J.A."/>
            <person name="Read T.D."/>
            <person name="Nelson K.E."/>
            <person name="Nelson W.C."/>
            <person name="Ward N.L."/>
            <person name="Tettelin H."/>
            <person name="Davidsen T.M."/>
            <person name="Beanan M.J."/>
            <person name="DeBoy R.T."/>
            <person name="Daugherty S.C."/>
            <person name="Brinkac L.M."/>
            <person name="Madupu R."/>
            <person name="Dodson R.J."/>
            <person name="Khouri H.M."/>
            <person name="Lee K.H."/>
            <person name="Carty H.A."/>
            <person name="Scanlan D."/>
            <person name="Heinzen R.A."/>
            <person name="Thompson H.A."/>
            <person name="Samuel J.E."/>
            <person name="Fraser C.M."/>
            <person name="Heidelberg J.F."/>
        </authorList>
    </citation>
    <scope>NUCLEOTIDE SEQUENCE [LARGE SCALE GENOMIC DNA]</scope>
    <source>
        <strain>RSA 493 / Nine Mile phase I</strain>
    </source>
</reference>
<reference key="2">
    <citation type="journal article" date="2009" name="Clin. Microbiol. Infect.">
        <title>In silico prediction and identification of outer membrane proteins and lipoproteins from Coxiella burnetii by the mass spectrometry techniques.</title>
        <authorList>
            <person name="Flores-Ramirez G."/>
            <person name="Toman R."/>
            <person name="Sekeyova Z."/>
            <person name="Skultety L."/>
        </authorList>
    </citation>
    <scope>IDENTIFICATION BY MASS SPECTROMETRY</scope>
    <source>
        <strain>RSA 493 / Nine Mile phase I</strain>
    </source>
</reference>
<comment type="function">
    <text evidence="1">Plays a critical role in the incorporation of lipoproteins in the outer membrane after they are released by the LolA protein.</text>
</comment>
<comment type="subunit">
    <text evidence="1">Monomer.</text>
</comment>
<comment type="subcellular location">
    <subcellularLocation>
        <location evidence="1">Cell outer membrane</location>
        <topology evidence="1">Lipid-anchor</topology>
    </subcellularLocation>
</comment>
<comment type="similarity">
    <text evidence="1">Belongs to the LolB family.</text>
</comment>
<accession>Q83AQ2</accession>
<keyword id="KW-0998">Cell outer membrane</keyword>
<keyword id="KW-0143">Chaperone</keyword>
<keyword id="KW-0449">Lipoprotein</keyword>
<keyword id="KW-0472">Membrane</keyword>
<keyword id="KW-0564">Palmitate</keyword>
<keyword id="KW-0653">Protein transport</keyword>
<keyword id="KW-1185">Reference proteome</keyword>
<keyword id="KW-0732">Signal</keyword>
<keyword id="KW-0813">Transport</keyword>
<sequence>MSLISNNEERSLRVRYCIAIALSALLISGCTTLRLPNQSTSVYHQQTWAQRYYDLSRISQWNIDGAFSIQQPGKTIIAAYDWQQKGMNYRIRIHSSLDIYSVNISGRPGMVTLWRSPRQHYTASTPEQLMQQQLGWQLPLSNLYYWIRGIPAPGAYQADFDTYTHLIALQQSGWHIRFSQYTTVGSVDLPRTLQLSNGSLAVKIVVKHWQ</sequence>
<protein>
    <recommendedName>
        <fullName evidence="1">Outer-membrane lipoprotein LolB</fullName>
    </recommendedName>
</protein>
<organism>
    <name type="scientific">Coxiella burnetii (strain RSA 493 / Nine Mile phase I)</name>
    <dbReference type="NCBI Taxonomy" id="227377"/>
    <lineage>
        <taxon>Bacteria</taxon>
        <taxon>Pseudomonadati</taxon>
        <taxon>Pseudomonadota</taxon>
        <taxon>Gammaproteobacteria</taxon>
        <taxon>Legionellales</taxon>
        <taxon>Coxiellaceae</taxon>
        <taxon>Coxiella</taxon>
    </lineage>
</organism>